<sequence length="276" mass="31055">MSIDIQWNLLDEQIAEKLRAKLDTKIAKLSLPRYIQDLHITSFDFGTSVPDVTIQDICDPDPRLYEETLYSDDSSSLDDEESDREEENMTELPPYGATENGVHKKDSTDVNMNHTQTSNQQSPQNIAESNIHKSVPNSAETPSFLRNSIGDVQIIAHVQYSGNMTMSMEACLAVNYPSKDFAMLPFTLQLSDIVLDGTLVVALIASHVHVCFVDTLEHNRGDVQSSIIKNIRVDSVVGEPNKQVLKNVAKVEKFVVQKICQIVEDEFVWPSYFTLY</sequence>
<proteinExistence type="inferred from homology"/>
<organism>
    <name type="scientific">Schizosaccharomyces japonicus (strain yFS275 / FY16936)</name>
    <name type="common">Fission yeast</name>
    <dbReference type="NCBI Taxonomy" id="402676"/>
    <lineage>
        <taxon>Eukaryota</taxon>
        <taxon>Fungi</taxon>
        <taxon>Dikarya</taxon>
        <taxon>Ascomycota</taxon>
        <taxon>Taphrinomycotina</taxon>
        <taxon>Schizosaccharomycetes</taxon>
        <taxon>Schizosaccharomycetales</taxon>
        <taxon>Schizosaccharomycetaceae</taxon>
        <taxon>Schizosaccharomyces</taxon>
    </lineage>
</organism>
<dbReference type="EMBL" id="KE651167">
    <property type="protein sequence ID" value="EEB08552.1"/>
    <property type="molecule type" value="Genomic_DNA"/>
</dbReference>
<dbReference type="RefSeq" id="XP_002174845.1">
    <property type="nucleotide sequence ID" value="XM_002174809.2"/>
</dbReference>
<dbReference type="SMR" id="B6K4Z5"/>
<dbReference type="STRING" id="402676.B6K4Z5"/>
<dbReference type="EnsemblFungi" id="EEB08552">
    <property type="protein sequence ID" value="EEB08552"/>
    <property type="gene ID" value="SJAG_03710"/>
</dbReference>
<dbReference type="GeneID" id="7052226"/>
<dbReference type="JaponicusDB" id="SJAG_03710">
    <property type="gene designation" value="mdm12"/>
</dbReference>
<dbReference type="VEuPathDB" id="FungiDB:SJAG_03710"/>
<dbReference type="eggNOG" id="ENOG502S3PB">
    <property type="taxonomic scope" value="Eukaryota"/>
</dbReference>
<dbReference type="HOGENOM" id="CLU_026794_2_0_1"/>
<dbReference type="OMA" id="AAWPSWI"/>
<dbReference type="OrthoDB" id="3356905at2759"/>
<dbReference type="Proteomes" id="UP000001744">
    <property type="component" value="Unassembled WGS sequence"/>
</dbReference>
<dbReference type="GO" id="GO:0005789">
    <property type="term" value="C:endoplasmic reticulum membrane"/>
    <property type="evidence" value="ECO:0007669"/>
    <property type="project" value="UniProtKB-SubCell"/>
</dbReference>
<dbReference type="GO" id="GO:0032865">
    <property type="term" value="C:ERMES complex"/>
    <property type="evidence" value="ECO:0000318"/>
    <property type="project" value="GO_Central"/>
</dbReference>
<dbReference type="GO" id="GO:0008289">
    <property type="term" value="F:lipid binding"/>
    <property type="evidence" value="ECO:0007669"/>
    <property type="project" value="UniProtKB-KW"/>
</dbReference>
<dbReference type="GO" id="GO:0000002">
    <property type="term" value="P:mitochondrial genome maintenance"/>
    <property type="evidence" value="ECO:0007669"/>
    <property type="project" value="UniProtKB-UniRule"/>
</dbReference>
<dbReference type="GO" id="GO:1990456">
    <property type="term" value="P:mitochondrion-endoplasmic reticulum membrane tethering"/>
    <property type="evidence" value="ECO:0000318"/>
    <property type="project" value="GO_Central"/>
</dbReference>
<dbReference type="GO" id="GO:0015914">
    <property type="term" value="P:phospholipid transport"/>
    <property type="evidence" value="ECO:0000318"/>
    <property type="project" value="GO_Central"/>
</dbReference>
<dbReference type="GO" id="GO:0045040">
    <property type="term" value="P:protein insertion into mitochondrial outer membrane"/>
    <property type="evidence" value="ECO:0007669"/>
    <property type="project" value="UniProtKB-UniRule"/>
</dbReference>
<dbReference type="CDD" id="cd21672">
    <property type="entry name" value="SMP_Mdm12"/>
    <property type="match status" value="1"/>
</dbReference>
<dbReference type="HAMAP" id="MF_03104">
    <property type="entry name" value="Mdm12"/>
    <property type="match status" value="1"/>
</dbReference>
<dbReference type="InterPro" id="IPR027532">
    <property type="entry name" value="Mdm12"/>
</dbReference>
<dbReference type="InterPro" id="IPR019411">
    <property type="entry name" value="MMM1_dom"/>
</dbReference>
<dbReference type="InterPro" id="IPR031468">
    <property type="entry name" value="SMP_LBD"/>
</dbReference>
<dbReference type="PANTHER" id="PTHR28204">
    <property type="entry name" value="MITOCHONDRIAL DISTRIBUTION AND MORPHOLOGY PROTEIN 12"/>
    <property type="match status" value="1"/>
</dbReference>
<dbReference type="PANTHER" id="PTHR28204:SF1">
    <property type="entry name" value="MITOCHONDRIAL DISTRIBUTION AND MORPHOLOGY PROTEIN 12"/>
    <property type="match status" value="1"/>
</dbReference>
<dbReference type="Pfam" id="PF10296">
    <property type="entry name" value="MMM1"/>
    <property type="match status" value="1"/>
</dbReference>
<dbReference type="PROSITE" id="PS51847">
    <property type="entry name" value="SMP"/>
    <property type="match status" value="1"/>
</dbReference>
<keyword id="KW-0256">Endoplasmic reticulum</keyword>
<keyword id="KW-0445">Lipid transport</keyword>
<keyword id="KW-0446">Lipid-binding</keyword>
<keyword id="KW-0472">Membrane</keyword>
<keyword id="KW-0496">Mitochondrion</keyword>
<keyword id="KW-1000">Mitochondrion outer membrane</keyword>
<keyword id="KW-1185">Reference proteome</keyword>
<keyword id="KW-0813">Transport</keyword>
<reference key="1">
    <citation type="journal article" date="2011" name="Science">
        <title>Comparative functional genomics of the fission yeasts.</title>
        <authorList>
            <person name="Rhind N."/>
            <person name="Chen Z."/>
            <person name="Yassour M."/>
            <person name="Thompson D.A."/>
            <person name="Haas B.J."/>
            <person name="Habib N."/>
            <person name="Wapinski I."/>
            <person name="Roy S."/>
            <person name="Lin M.F."/>
            <person name="Heiman D.I."/>
            <person name="Young S.K."/>
            <person name="Furuya K."/>
            <person name="Guo Y."/>
            <person name="Pidoux A."/>
            <person name="Chen H.M."/>
            <person name="Robbertse B."/>
            <person name="Goldberg J.M."/>
            <person name="Aoki K."/>
            <person name="Bayne E.H."/>
            <person name="Berlin A.M."/>
            <person name="Desjardins C.A."/>
            <person name="Dobbs E."/>
            <person name="Dukaj L."/>
            <person name="Fan L."/>
            <person name="FitzGerald M.G."/>
            <person name="French C."/>
            <person name="Gujja S."/>
            <person name="Hansen K."/>
            <person name="Keifenheim D."/>
            <person name="Levin J.Z."/>
            <person name="Mosher R.A."/>
            <person name="Mueller C.A."/>
            <person name="Pfiffner J."/>
            <person name="Priest M."/>
            <person name="Russ C."/>
            <person name="Smialowska A."/>
            <person name="Swoboda P."/>
            <person name="Sykes S.M."/>
            <person name="Vaughn M."/>
            <person name="Vengrova S."/>
            <person name="Yoder R."/>
            <person name="Zeng Q."/>
            <person name="Allshire R."/>
            <person name="Baulcombe D."/>
            <person name="Birren B.W."/>
            <person name="Brown W."/>
            <person name="Ekwall K."/>
            <person name="Kellis M."/>
            <person name="Leatherwood J."/>
            <person name="Levin H."/>
            <person name="Margalit H."/>
            <person name="Martienssen R."/>
            <person name="Nieduszynski C.A."/>
            <person name="Spatafora J.W."/>
            <person name="Friedman N."/>
            <person name="Dalgaard J.Z."/>
            <person name="Baumann P."/>
            <person name="Niki H."/>
            <person name="Regev A."/>
            <person name="Nusbaum C."/>
        </authorList>
    </citation>
    <scope>NUCLEOTIDE SEQUENCE [LARGE SCALE GENOMIC DNA]</scope>
    <source>
        <strain>yFS275 / FY16936</strain>
    </source>
</reference>
<evidence type="ECO:0000255" key="1">
    <source>
        <dbReference type="HAMAP-Rule" id="MF_03104"/>
    </source>
</evidence>
<evidence type="ECO:0000256" key="2">
    <source>
        <dbReference type="SAM" id="MobiDB-lite"/>
    </source>
</evidence>
<comment type="function">
    <text evidence="1">Component of the ERMES/MDM complex, which serves as a molecular tether to connect the endoplasmic reticulum (ER) and mitochondria. Components of this complex are involved in the control of mitochondrial shape and protein biogenesis, and function in nonvesicular lipid trafficking between the ER and mitochondria. Mdm12 is required for the interaction of the ER-resident membrane protein mmm1 and the outer mitochondrial membrane-resident beta-barrel protein mdm10. The mdm12-mmm1 subcomplex functions in the major beta-barrel assembly pathway that is responsible for biogenesis of all mitochondrial outer membrane beta-barrel proteins, and acts in a late step after the SAM complex. The mdm10-mdm12-mmm1 subcomplex further acts in the TOM40-specific pathway after the action of the mdm12-mmm1 complex. Essential for establishing and maintaining the structure of mitochondria and maintenance of mtDNA nucleoids.</text>
</comment>
<comment type="subunit">
    <text evidence="1">Component of the ER-mitochondria encounter structure (ERMES) or MDM complex, composed of mmm1, mdm10, mdm12 and mdm34. A mmm1 homodimer associates with one molecule of mdm12 on each side in a pairwise head-to-tail manner, and the SMP-LTD domains of mmm1 and mdm12 generate a continuous hydrophobic tunnel for phospholipid trafficking.</text>
</comment>
<comment type="subcellular location">
    <subcellularLocation>
        <location evidence="1">Mitochondrion outer membrane</location>
        <topology evidence="1">Peripheral membrane protein</topology>
        <orientation evidence="1">Cytoplasmic side</orientation>
    </subcellularLocation>
    <subcellularLocation>
        <location evidence="1">Endoplasmic reticulum membrane</location>
        <topology evidence="1">Peripheral membrane protein</topology>
        <orientation evidence="1">Cytoplasmic side</orientation>
    </subcellularLocation>
    <text evidence="1">The ERMES/MDM complex localizes to a few discrete foci (around 10 per single cell), that represent mitochondria-endoplasmic reticulum junctions. These foci are often found next to mtDNA nucleoids.</text>
</comment>
<comment type="domain">
    <text evidence="1">The SMP-LTD domain is a barrel-like domain that can bind various types of glycerophospholipids in its interior and mediate their transfer between two adjacent bilayers.</text>
</comment>
<comment type="similarity">
    <text evidence="1">Belongs to the MDM12 family.</text>
</comment>
<name>MDM12_SCHJY</name>
<accession>B6K4Z5</accession>
<gene>
    <name evidence="1" type="primary">mdm12</name>
    <name type="ORF">SJAG_03710</name>
</gene>
<protein>
    <recommendedName>
        <fullName evidence="1">Mitochondrial distribution and morphology protein 12</fullName>
    </recommendedName>
    <alternativeName>
        <fullName evidence="1">Mitochondrial inheritance component mdm12</fullName>
    </alternativeName>
</protein>
<feature type="chain" id="PRO_0000384312" description="Mitochondrial distribution and morphology protein 12">
    <location>
        <begin position="1"/>
        <end position="276"/>
    </location>
</feature>
<feature type="domain" description="SMP-LTD" evidence="1">
    <location>
        <begin position="1"/>
        <end position="276"/>
    </location>
</feature>
<feature type="region of interest" description="Disordered" evidence="2">
    <location>
        <begin position="68"/>
        <end position="104"/>
    </location>
</feature>
<feature type="compositionally biased region" description="Acidic residues" evidence="2">
    <location>
        <begin position="75"/>
        <end position="89"/>
    </location>
</feature>